<comment type="function">
    <text evidence="1">Involved in the synthesis of amylose in endosperm.</text>
</comment>
<comment type="catalytic activity">
    <reaction>
        <text>an NDP-alpha-D-glucose + [(1-&gt;4)-alpha-D-glucosyl](n) = [(1-&gt;4)-alpha-D-glucosyl](n+1) + a ribonucleoside 5'-diphosphate + H(+)</text>
        <dbReference type="Rhea" id="RHEA:15873"/>
        <dbReference type="Rhea" id="RHEA-COMP:9584"/>
        <dbReference type="Rhea" id="RHEA-COMP:9587"/>
        <dbReference type="ChEBI" id="CHEBI:15378"/>
        <dbReference type="ChEBI" id="CHEBI:15444"/>
        <dbReference type="ChEBI" id="CHEBI:57930"/>
        <dbReference type="ChEBI" id="CHEBI:76533"/>
        <dbReference type="EC" id="2.4.1.242"/>
    </reaction>
</comment>
<comment type="pathway">
    <text>Glycan biosynthesis; starch biosynthesis.</text>
</comment>
<comment type="subcellular location">
    <subcellularLocation>
        <location evidence="1">Plastid</location>
        <location evidence="1">Chloroplast</location>
    </subcellularLocation>
    <subcellularLocation>
        <location evidence="1">Plastid</location>
        <location evidence="1">Amyloplast</location>
    </subcellularLocation>
    <text evidence="1">Amyloplast or chloroplast, granule-bound.</text>
</comment>
<comment type="similarity">
    <text evidence="3">Belongs to the glycosyltransferase 1 family. Bacterial/plant glycogen synthase subfamily.</text>
</comment>
<protein>
    <recommendedName>
        <fullName>Granule-bound starch synthase 1b, chloroplastic/amyloplastic</fullName>
        <ecNumber>2.4.1.242</ecNumber>
    </recommendedName>
    <alternativeName>
        <fullName>Granule-bound starch synthase Ib</fullName>
    </alternativeName>
</protein>
<feature type="transit peptide" description="Chloroplast" evidence="2">
    <location>
        <begin position="1" status="less than"/>
        <end position="34"/>
    </location>
</feature>
<feature type="chain" id="PRO_0000011127" description="Granule-bound starch synthase 1b, chloroplastic/amyloplastic">
    <location>
        <begin position="35"/>
        <end position="565"/>
    </location>
</feature>
<feature type="binding site" evidence="1">
    <location>
        <position position="52"/>
    </location>
    <ligand>
        <name>ADP-alpha-D-glucose</name>
        <dbReference type="ChEBI" id="CHEBI:57498"/>
    </ligand>
</feature>
<feature type="non-terminal residue">
    <location>
        <position position="1"/>
    </location>
</feature>
<sequence>VFLSMRNKTQLAKRRATNYETHRNSSRTSSPIVCSTGMPIIFVATEVHPWCKTGGLGDVVGGLPPALAAMGHRVMTIAPRYDQYKDTWDTNVLVEVIVGDRTETVRFFHCYKRGVDRVFVDHPMFLEKVWGKTGSKLYGPTTGTDFRDNQLRFCLLCLAALEAPRVLNLNNSEYFSGPYGENVVFVANDWHTAVLPCYLKSMYKQNGIYENAKVAFCIHNIAYQGRFPRADFELLNLPESFMPSFDFVDGHVKPVVGRKINWMKAGITECDVVLTVSPHYVKELTSGPEKGVELDGVLRTKPLETGIVNGMDVIDWNPATDKYISVKYNATTVAQARALNKEILQAEVGLSVDSSIPVIVFIGRLEEQKGSDILIAASPEFVEENVQIIVLGTGKKKMEEELMLLEVKYPQNARGIAKFNVPLAHMMFAGADFIIIPSRFEPCGLIQLQGMSYGVVPICSSTGGLVDTVREGVTGFHMGSFNVEFETVDPTDVAAVGSNVTRALKQYRTPVFHAMVQNCMAQDLSWKGPAKKWEEALLSLGVEGSQPGIEGEEIAPLAKQNVATP</sequence>
<organism>
    <name type="scientific">Hordeum vulgare</name>
    <name type="common">Barley</name>
    <dbReference type="NCBI Taxonomy" id="4513"/>
    <lineage>
        <taxon>Eukaryota</taxon>
        <taxon>Viridiplantae</taxon>
        <taxon>Streptophyta</taxon>
        <taxon>Embryophyta</taxon>
        <taxon>Tracheophyta</taxon>
        <taxon>Spermatophyta</taxon>
        <taxon>Magnoliopsida</taxon>
        <taxon>Liliopsida</taxon>
        <taxon>Poales</taxon>
        <taxon>Poaceae</taxon>
        <taxon>BOP clade</taxon>
        <taxon>Pooideae</taxon>
        <taxon>Triticodae</taxon>
        <taxon>Triticeae</taxon>
        <taxon>Hordeinae</taxon>
        <taxon>Hordeum</taxon>
    </lineage>
</organism>
<evidence type="ECO:0000250" key="1"/>
<evidence type="ECO:0000269" key="2">
    <source>
    </source>
</evidence>
<evidence type="ECO:0000305" key="3"/>
<name>SSG1B_HORVU</name>
<accession>Q8LL05</accession>
<keyword id="KW-0035">Amyloplast</keyword>
<keyword id="KW-0150">Chloroplast</keyword>
<keyword id="KW-0903">Direct protein sequencing</keyword>
<keyword id="KW-0328">Glycosyltransferase</keyword>
<keyword id="KW-0934">Plastid</keyword>
<keyword id="KW-0750">Starch biosynthesis</keyword>
<keyword id="KW-0808">Transferase</keyword>
<keyword id="KW-0809">Transit peptide</keyword>
<reference key="1">
    <citation type="journal article" date="2002" name="Plant Physiol.">
        <title>The altered pattern of amylose accumulation in the endosperm of low-amylose barley cultivars is attributable to a single mutant allele of granule-bound starch synthase I with a deletion in the 5'-non-coding region.</title>
        <authorList>
            <person name="Patron N.J."/>
            <person name="Smith A.M."/>
            <person name="Fahy B.F."/>
            <person name="Hylton C.M."/>
            <person name="Naldrett M.J."/>
            <person name="Rossnagel B.G."/>
            <person name="Denyer K."/>
        </authorList>
    </citation>
    <scope>NUCLEOTIDE SEQUENCE [MRNA]</scope>
    <scope>PROTEIN SEQUENCE OF 35-44</scope>
</reference>
<dbReference type="EC" id="2.4.1.242"/>
<dbReference type="EMBL" id="AF486521">
    <property type="protein sequence ID" value="AAM74054.1"/>
    <property type="molecule type" value="mRNA"/>
</dbReference>
<dbReference type="SMR" id="Q8LL05"/>
<dbReference type="CAZy" id="GT5">
    <property type="family name" value="Glycosyltransferase Family 5"/>
</dbReference>
<dbReference type="UniPathway" id="UPA00152"/>
<dbReference type="ExpressionAtlas" id="Q8LL05">
    <property type="expression patterns" value="baseline and differential"/>
</dbReference>
<dbReference type="GO" id="GO:0009501">
    <property type="term" value="C:amyloplast"/>
    <property type="evidence" value="ECO:0007669"/>
    <property type="project" value="UniProtKB-SubCell"/>
</dbReference>
<dbReference type="GO" id="GO:0009507">
    <property type="term" value="C:chloroplast"/>
    <property type="evidence" value="ECO:0007669"/>
    <property type="project" value="UniProtKB-SubCell"/>
</dbReference>
<dbReference type="GO" id="GO:0004373">
    <property type="term" value="F:alpha-1,4-glucan glucosyltransferase (UDP-glucose donor) activity"/>
    <property type="evidence" value="ECO:0007669"/>
    <property type="project" value="InterPro"/>
</dbReference>
<dbReference type="GO" id="GO:0019252">
    <property type="term" value="P:starch biosynthetic process"/>
    <property type="evidence" value="ECO:0007669"/>
    <property type="project" value="UniProtKB-UniPathway"/>
</dbReference>
<dbReference type="CDD" id="cd03791">
    <property type="entry name" value="GT5_Glycogen_synthase_DULL1-like"/>
    <property type="match status" value="1"/>
</dbReference>
<dbReference type="FunFam" id="3.40.50.2000:FF:000073">
    <property type="entry name" value="Starch synthase, chloroplastic/amyloplastic"/>
    <property type="match status" value="1"/>
</dbReference>
<dbReference type="FunFam" id="3.40.50.2000:FF:000090">
    <property type="entry name" value="Starch synthase, chloroplastic/amyloplastic"/>
    <property type="match status" value="1"/>
</dbReference>
<dbReference type="Gene3D" id="3.40.50.2000">
    <property type="entry name" value="Glycogen Phosphorylase B"/>
    <property type="match status" value="2"/>
</dbReference>
<dbReference type="HAMAP" id="MF_00484">
    <property type="entry name" value="Glycogen_synth"/>
    <property type="match status" value="1"/>
</dbReference>
<dbReference type="InterPro" id="IPR001296">
    <property type="entry name" value="Glyco_trans_1"/>
</dbReference>
<dbReference type="InterPro" id="IPR011835">
    <property type="entry name" value="GS/SS"/>
</dbReference>
<dbReference type="InterPro" id="IPR013534">
    <property type="entry name" value="Starch_synth_cat_dom"/>
</dbReference>
<dbReference type="NCBIfam" id="TIGR02095">
    <property type="entry name" value="glgA"/>
    <property type="match status" value="1"/>
</dbReference>
<dbReference type="PANTHER" id="PTHR45825">
    <property type="entry name" value="GRANULE-BOUND STARCH SYNTHASE 1, CHLOROPLASTIC/AMYLOPLASTIC"/>
    <property type="match status" value="1"/>
</dbReference>
<dbReference type="PANTHER" id="PTHR45825:SF17">
    <property type="entry name" value="STARCH SYNTHASE, CHLOROPLASTIC_AMYLOPLASTIC"/>
    <property type="match status" value="1"/>
</dbReference>
<dbReference type="Pfam" id="PF08323">
    <property type="entry name" value="Glyco_transf_5"/>
    <property type="match status" value="1"/>
</dbReference>
<dbReference type="Pfam" id="PF00534">
    <property type="entry name" value="Glycos_transf_1"/>
    <property type="match status" value="1"/>
</dbReference>
<dbReference type="SUPFAM" id="SSF53756">
    <property type="entry name" value="UDP-Glycosyltransferase/glycogen phosphorylase"/>
    <property type="match status" value="1"/>
</dbReference>
<proteinExistence type="evidence at protein level"/>